<dbReference type="EMBL" id="EU809460">
    <property type="protein sequence ID" value="ACJ03846.1"/>
    <property type="molecule type" value="mRNA"/>
</dbReference>
<dbReference type="EMBL" id="AK029064">
    <property type="protein sequence ID" value="BAC26273.1"/>
    <property type="molecule type" value="mRNA"/>
</dbReference>
<dbReference type="EMBL" id="BC141305">
    <property type="protein sequence ID" value="AAI41306.1"/>
    <property type="molecule type" value="mRNA"/>
</dbReference>
<dbReference type="CCDS" id="CCDS19669.2"/>
<dbReference type="RefSeq" id="NP_780729.3">
    <property type="nucleotide sequence ID" value="NM_175520.5"/>
</dbReference>
<dbReference type="SMR" id="Q8C131"/>
<dbReference type="FunCoup" id="Q8C131">
    <property type="interactions" value="764"/>
</dbReference>
<dbReference type="STRING" id="10090.ENSMUSP00000129280"/>
<dbReference type="BindingDB" id="Q8C131"/>
<dbReference type="ChEMBL" id="CHEMBL2146354"/>
<dbReference type="GuidetoPHARMACOLOGY" id="311"/>
<dbReference type="GlyCosmos" id="Q8C131">
    <property type="glycosylation" value="1 site, No reported glycans"/>
</dbReference>
<dbReference type="GlyGen" id="Q8C131">
    <property type="glycosylation" value="1 site"/>
</dbReference>
<dbReference type="iPTMnet" id="Q8C131"/>
<dbReference type="PhosphoSitePlus" id="Q8C131"/>
<dbReference type="PaxDb" id="10090-ENSMUSP00000129280"/>
<dbReference type="ProteomicsDB" id="271494"/>
<dbReference type="DNASU" id="243270"/>
<dbReference type="Ensembl" id="ENSMUST00000164267.3">
    <property type="protein sequence ID" value="ENSMUSP00000129280.3"/>
    <property type="gene ID" value="ENSMUSG00000049241.7"/>
</dbReference>
<dbReference type="GeneID" id="243270"/>
<dbReference type="KEGG" id="mmu:243270"/>
<dbReference type="AGR" id="MGI:2441671"/>
<dbReference type="CTD" id="27198"/>
<dbReference type="MGI" id="MGI:2441671">
    <property type="gene designation" value="Hcar1"/>
</dbReference>
<dbReference type="eggNOG" id="KOG3656">
    <property type="taxonomic scope" value="Eukaryota"/>
</dbReference>
<dbReference type="GeneTree" id="ENSGT00990000203619"/>
<dbReference type="InParanoid" id="Q8C131"/>
<dbReference type="OrthoDB" id="10055255at2759"/>
<dbReference type="PhylomeDB" id="Q8C131"/>
<dbReference type="Reactome" id="R-MMU-3296197">
    <property type="pathway name" value="Hydroxycarboxylic acid-binding receptors"/>
</dbReference>
<dbReference type="Reactome" id="R-MMU-418594">
    <property type="pathway name" value="G alpha (i) signalling events"/>
</dbReference>
<dbReference type="PRO" id="PR:Q8C131"/>
<dbReference type="Proteomes" id="UP000000589">
    <property type="component" value="Chromosome 5"/>
</dbReference>
<dbReference type="RNAct" id="Q8C131">
    <property type="molecule type" value="protein"/>
</dbReference>
<dbReference type="GO" id="GO:0016020">
    <property type="term" value="C:membrane"/>
    <property type="evidence" value="ECO:0000314"/>
    <property type="project" value="MGI"/>
</dbReference>
<dbReference type="GO" id="GO:0005886">
    <property type="term" value="C:plasma membrane"/>
    <property type="evidence" value="ECO:0000266"/>
    <property type="project" value="MGI"/>
</dbReference>
<dbReference type="GO" id="GO:0004930">
    <property type="term" value="F:G protein-coupled receptor activity"/>
    <property type="evidence" value="ECO:0000314"/>
    <property type="project" value="MGI"/>
</dbReference>
<dbReference type="GO" id="GO:0007186">
    <property type="term" value="P:G protein-coupled receptor signaling pathway"/>
    <property type="evidence" value="ECO:0000314"/>
    <property type="project" value="MGI"/>
</dbReference>
<dbReference type="GO" id="GO:0050995">
    <property type="term" value="P:negative regulation of lipid catabolic process"/>
    <property type="evidence" value="ECO:0000314"/>
    <property type="project" value="MGI"/>
</dbReference>
<dbReference type="CDD" id="cd15201">
    <property type="entry name" value="7tmA_HCAR1-3"/>
    <property type="match status" value="1"/>
</dbReference>
<dbReference type="FunFam" id="1.20.1070.10:FF:000241">
    <property type="entry name" value="Hydroxycarboxylic acid receptor 1"/>
    <property type="match status" value="1"/>
</dbReference>
<dbReference type="Gene3D" id="1.20.1070.10">
    <property type="entry name" value="Rhodopsin 7-helix transmembrane proteins"/>
    <property type="match status" value="1"/>
</dbReference>
<dbReference type="InterPro" id="IPR000276">
    <property type="entry name" value="GPCR_Rhodpsn"/>
</dbReference>
<dbReference type="InterPro" id="IPR017452">
    <property type="entry name" value="GPCR_Rhodpsn_7TM"/>
</dbReference>
<dbReference type="InterPro" id="IPR051893">
    <property type="entry name" value="HCARs"/>
</dbReference>
<dbReference type="PANTHER" id="PTHR46048:SF3">
    <property type="entry name" value="HYDROXYCARBOXYLIC ACID RECEPTOR 1"/>
    <property type="match status" value="1"/>
</dbReference>
<dbReference type="PANTHER" id="PTHR46048">
    <property type="entry name" value="HYDROXYCARBOXYLIC ACID RECEPTOR 2"/>
    <property type="match status" value="1"/>
</dbReference>
<dbReference type="Pfam" id="PF00001">
    <property type="entry name" value="7tm_1"/>
    <property type="match status" value="1"/>
</dbReference>
<dbReference type="PRINTS" id="PR00237">
    <property type="entry name" value="GPCRRHODOPSN"/>
</dbReference>
<dbReference type="SUPFAM" id="SSF81321">
    <property type="entry name" value="Family A G protein-coupled receptor-like"/>
    <property type="match status" value="1"/>
</dbReference>
<dbReference type="PROSITE" id="PS00237">
    <property type="entry name" value="G_PROTEIN_RECEP_F1_1"/>
    <property type="match status" value="1"/>
</dbReference>
<dbReference type="PROSITE" id="PS50262">
    <property type="entry name" value="G_PROTEIN_RECEP_F1_2"/>
    <property type="match status" value="1"/>
</dbReference>
<keyword id="KW-1003">Cell membrane</keyword>
<keyword id="KW-1015">Disulfide bond</keyword>
<keyword id="KW-0297">G-protein coupled receptor</keyword>
<keyword id="KW-0325">Glycoprotein</keyword>
<keyword id="KW-0472">Membrane</keyword>
<keyword id="KW-0675">Receptor</keyword>
<keyword id="KW-1185">Reference proteome</keyword>
<keyword id="KW-0807">Transducer</keyword>
<keyword id="KW-0812">Transmembrane</keyword>
<keyword id="KW-1133">Transmembrane helix</keyword>
<feature type="chain" id="PRO_0000069587" description="Hydroxycarboxylic acid receptor 1">
    <location>
        <begin position="1"/>
        <end position="343"/>
    </location>
</feature>
<feature type="topological domain" description="Extracellular" evidence="1">
    <location>
        <begin position="1"/>
        <end position="21"/>
    </location>
</feature>
<feature type="transmembrane region" description="Helical; Name=1" evidence="1">
    <location>
        <begin position="22"/>
        <end position="42"/>
    </location>
</feature>
<feature type="topological domain" description="Cytoplasmic" evidence="1">
    <location>
        <begin position="43"/>
        <end position="49"/>
    </location>
</feature>
<feature type="transmembrane region" description="Helical; Name=2" evidence="1">
    <location>
        <begin position="50"/>
        <end position="70"/>
    </location>
</feature>
<feature type="topological domain" description="Extracellular" evidence="1">
    <location>
        <begin position="71"/>
        <end position="90"/>
    </location>
</feature>
<feature type="transmembrane region" description="Helical; Name=3" evidence="1">
    <location>
        <begin position="91"/>
        <end position="111"/>
    </location>
</feature>
<feature type="topological domain" description="Cytoplasmic" evidence="1">
    <location>
        <begin position="112"/>
        <end position="131"/>
    </location>
</feature>
<feature type="transmembrane region" description="Helical; Name=4" evidence="1">
    <location>
        <begin position="132"/>
        <end position="152"/>
    </location>
</feature>
<feature type="topological domain" description="Extracellular" evidence="1">
    <location>
        <begin position="153"/>
        <end position="182"/>
    </location>
</feature>
<feature type="transmembrane region" description="Helical; Name=5" evidence="1">
    <location>
        <begin position="183"/>
        <end position="203"/>
    </location>
</feature>
<feature type="topological domain" description="Cytoplasmic" evidence="1">
    <location>
        <begin position="204"/>
        <end position="220"/>
    </location>
</feature>
<feature type="transmembrane region" description="Helical; Name=6" evidence="1">
    <location>
        <begin position="221"/>
        <end position="241"/>
    </location>
</feature>
<feature type="topological domain" description="Extracellular" evidence="1">
    <location>
        <begin position="242"/>
        <end position="259"/>
    </location>
</feature>
<feature type="transmembrane region" description="Helical; Name=7" evidence="1">
    <location>
        <begin position="260"/>
        <end position="280"/>
    </location>
</feature>
<feature type="topological domain" description="Cytoplasmic" evidence="1">
    <location>
        <begin position="281"/>
        <end position="343"/>
    </location>
</feature>
<feature type="region of interest" description="Disordered" evidence="3">
    <location>
        <begin position="319"/>
        <end position="343"/>
    </location>
</feature>
<feature type="compositionally biased region" description="Polar residues" evidence="3">
    <location>
        <begin position="319"/>
        <end position="334"/>
    </location>
</feature>
<feature type="glycosylation site" description="N-linked (GlcNAc...) asparagine" evidence="1">
    <location>
        <position position="3"/>
    </location>
</feature>
<feature type="disulfide bond" evidence="2">
    <location>
        <begin position="88"/>
        <end position="165"/>
    </location>
</feature>
<feature type="sequence conflict" description="In Ref. 1; ACJ03846 and 3; AAI41306." evidence="6" ref="1 3">
    <original>T</original>
    <variation>A</variation>
    <location>
        <position position="290"/>
    </location>
</feature>
<protein>
    <recommendedName>
        <fullName>Hydroxycarboxylic acid receptor 1</fullName>
    </recommendedName>
    <alternativeName>
        <fullName>G-protein coupled receptor 81</fullName>
    </alternativeName>
</protein>
<reference key="1">
    <citation type="journal article" date="2009" name="J. Biol. Chem.">
        <title>Lactate inhibits lipolysis in fat cells through activation of an orphan G-protein-coupled receptor, GPR81.</title>
        <authorList>
            <person name="Liu C."/>
            <person name="Wu J."/>
            <person name="Zhu J."/>
            <person name="Kuei C."/>
            <person name="Yu J."/>
            <person name="Shelton J."/>
            <person name="Sutton S.W."/>
            <person name="Li X."/>
            <person name="Yun S.J."/>
            <person name="Mirzadegan T."/>
            <person name="Mazur C."/>
            <person name="Kamme F."/>
            <person name="Lovenberg T.W."/>
        </authorList>
    </citation>
    <scope>NUCLEOTIDE SEQUENCE [MRNA]</scope>
    <scope>TISSUE SPECIFICITY</scope>
    <scope>FUNCTION</scope>
    <source>
        <strain>C57BL/6J</strain>
    </source>
</reference>
<reference key="2">
    <citation type="journal article" date="2005" name="Science">
        <title>The transcriptional landscape of the mammalian genome.</title>
        <authorList>
            <person name="Carninci P."/>
            <person name="Kasukawa T."/>
            <person name="Katayama S."/>
            <person name="Gough J."/>
            <person name="Frith M.C."/>
            <person name="Maeda N."/>
            <person name="Oyama R."/>
            <person name="Ravasi T."/>
            <person name="Lenhard B."/>
            <person name="Wells C."/>
            <person name="Kodzius R."/>
            <person name="Shimokawa K."/>
            <person name="Bajic V.B."/>
            <person name="Brenner S.E."/>
            <person name="Batalov S."/>
            <person name="Forrest A.R."/>
            <person name="Zavolan M."/>
            <person name="Davis M.J."/>
            <person name="Wilming L.G."/>
            <person name="Aidinis V."/>
            <person name="Allen J.E."/>
            <person name="Ambesi-Impiombato A."/>
            <person name="Apweiler R."/>
            <person name="Aturaliya R.N."/>
            <person name="Bailey T.L."/>
            <person name="Bansal M."/>
            <person name="Baxter L."/>
            <person name="Beisel K.W."/>
            <person name="Bersano T."/>
            <person name="Bono H."/>
            <person name="Chalk A.M."/>
            <person name="Chiu K.P."/>
            <person name="Choudhary V."/>
            <person name="Christoffels A."/>
            <person name="Clutterbuck D.R."/>
            <person name="Crowe M.L."/>
            <person name="Dalla E."/>
            <person name="Dalrymple B.P."/>
            <person name="de Bono B."/>
            <person name="Della Gatta G."/>
            <person name="di Bernardo D."/>
            <person name="Down T."/>
            <person name="Engstrom P."/>
            <person name="Fagiolini M."/>
            <person name="Faulkner G."/>
            <person name="Fletcher C.F."/>
            <person name="Fukushima T."/>
            <person name="Furuno M."/>
            <person name="Futaki S."/>
            <person name="Gariboldi M."/>
            <person name="Georgii-Hemming P."/>
            <person name="Gingeras T.R."/>
            <person name="Gojobori T."/>
            <person name="Green R.E."/>
            <person name="Gustincich S."/>
            <person name="Harbers M."/>
            <person name="Hayashi Y."/>
            <person name="Hensch T.K."/>
            <person name="Hirokawa N."/>
            <person name="Hill D."/>
            <person name="Huminiecki L."/>
            <person name="Iacono M."/>
            <person name="Ikeo K."/>
            <person name="Iwama A."/>
            <person name="Ishikawa T."/>
            <person name="Jakt M."/>
            <person name="Kanapin A."/>
            <person name="Katoh M."/>
            <person name="Kawasawa Y."/>
            <person name="Kelso J."/>
            <person name="Kitamura H."/>
            <person name="Kitano H."/>
            <person name="Kollias G."/>
            <person name="Krishnan S.P."/>
            <person name="Kruger A."/>
            <person name="Kummerfeld S.K."/>
            <person name="Kurochkin I.V."/>
            <person name="Lareau L.F."/>
            <person name="Lazarevic D."/>
            <person name="Lipovich L."/>
            <person name="Liu J."/>
            <person name="Liuni S."/>
            <person name="McWilliam S."/>
            <person name="Madan Babu M."/>
            <person name="Madera M."/>
            <person name="Marchionni L."/>
            <person name="Matsuda H."/>
            <person name="Matsuzawa S."/>
            <person name="Miki H."/>
            <person name="Mignone F."/>
            <person name="Miyake S."/>
            <person name="Morris K."/>
            <person name="Mottagui-Tabar S."/>
            <person name="Mulder N."/>
            <person name="Nakano N."/>
            <person name="Nakauchi H."/>
            <person name="Ng P."/>
            <person name="Nilsson R."/>
            <person name="Nishiguchi S."/>
            <person name="Nishikawa S."/>
            <person name="Nori F."/>
            <person name="Ohara O."/>
            <person name="Okazaki Y."/>
            <person name="Orlando V."/>
            <person name="Pang K.C."/>
            <person name="Pavan W.J."/>
            <person name="Pavesi G."/>
            <person name="Pesole G."/>
            <person name="Petrovsky N."/>
            <person name="Piazza S."/>
            <person name="Reed J."/>
            <person name="Reid J.F."/>
            <person name="Ring B.Z."/>
            <person name="Ringwald M."/>
            <person name="Rost B."/>
            <person name="Ruan Y."/>
            <person name="Salzberg S.L."/>
            <person name="Sandelin A."/>
            <person name="Schneider C."/>
            <person name="Schoenbach C."/>
            <person name="Sekiguchi K."/>
            <person name="Semple C.A."/>
            <person name="Seno S."/>
            <person name="Sessa L."/>
            <person name="Sheng Y."/>
            <person name="Shibata Y."/>
            <person name="Shimada H."/>
            <person name="Shimada K."/>
            <person name="Silva D."/>
            <person name="Sinclair B."/>
            <person name="Sperling S."/>
            <person name="Stupka E."/>
            <person name="Sugiura K."/>
            <person name="Sultana R."/>
            <person name="Takenaka Y."/>
            <person name="Taki K."/>
            <person name="Tammoja K."/>
            <person name="Tan S.L."/>
            <person name="Tang S."/>
            <person name="Taylor M.S."/>
            <person name="Tegner J."/>
            <person name="Teichmann S.A."/>
            <person name="Ueda H.R."/>
            <person name="van Nimwegen E."/>
            <person name="Verardo R."/>
            <person name="Wei C.L."/>
            <person name="Yagi K."/>
            <person name="Yamanishi H."/>
            <person name="Zabarovsky E."/>
            <person name="Zhu S."/>
            <person name="Zimmer A."/>
            <person name="Hide W."/>
            <person name="Bult C."/>
            <person name="Grimmond S.M."/>
            <person name="Teasdale R.D."/>
            <person name="Liu E.T."/>
            <person name="Brusic V."/>
            <person name="Quackenbush J."/>
            <person name="Wahlestedt C."/>
            <person name="Mattick J.S."/>
            <person name="Hume D.A."/>
            <person name="Kai C."/>
            <person name="Sasaki D."/>
            <person name="Tomaru Y."/>
            <person name="Fukuda S."/>
            <person name="Kanamori-Katayama M."/>
            <person name="Suzuki M."/>
            <person name="Aoki J."/>
            <person name="Arakawa T."/>
            <person name="Iida J."/>
            <person name="Imamura K."/>
            <person name="Itoh M."/>
            <person name="Kato T."/>
            <person name="Kawaji H."/>
            <person name="Kawagashira N."/>
            <person name="Kawashima T."/>
            <person name="Kojima M."/>
            <person name="Kondo S."/>
            <person name="Konno H."/>
            <person name="Nakano K."/>
            <person name="Ninomiya N."/>
            <person name="Nishio T."/>
            <person name="Okada M."/>
            <person name="Plessy C."/>
            <person name="Shibata K."/>
            <person name="Shiraki T."/>
            <person name="Suzuki S."/>
            <person name="Tagami M."/>
            <person name="Waki K."/>
            <person name="Watahiki A."/>
            <person name="Okamura-Oho Y."/>
            <person name="Suzuki H."/>
            <person name="Kawai J."/>
            <person name="Hayashizaki Y."/>
        </authorList>
    </citation>
    <scope>NUCLEOTIDE SEQUENCE [LARGE SCALE MRNA]</scope>
    <source>
        <strain>C57BL/6J</strain>
        <tissue>Skin</tissue>
    </source>
</reference>
<reference key="3">
    <citation type="journal article" date="2004" name="Genome Res.">
        <title>The status, quality, and expansion of the NIH full-length cDNA project: the Mammalian Gene Collection (MGC).</title>
        <authorList>
            <consortium name="The MGC Project Team"/>
        </authorList>
    </citation>
    <scope>NUCLEOTIDE SEQUENCE [LARGE SCALE MRNA]</scope>
    <source>
        <tissue>Brain</tissue>
    </source>
</reference>
<reference key="4">
    <citation type="journal article" date="2008" name="J. Lipid Res.">
        <title>Elucidation of signaling and functional activities of an orphan GPCR, GPR81.</title>
        <authorList>
            <person name="Ge H."/>
            <person name="Weiszmann J."/>
            <person name="Reagan J.D."/>
            <person name="Gupte J."/>
            <person name="Baribault H."/>
            <person name="Gyuris T."/>
            <person name="Chen J.-L."/>
            <person name="Tian H."/>
            <person name="Li Y."/>
        </authorList>
    </citation>
    <scope>TISSUE SPECIFICITY</scope>
    <scope>FUNCTION</scope>
</reference>
<reference key="5">
    <citation type="journal article" date="2010" name="Cell">
        <title>A tissue-specific atlas of mouse protein phosphorylation and expression.</title>
        <authorList>
            <person name="Huttlin E.L."/>
            <person name="Jedrychowski M.P."/>
            <person name="Elias J.E."/>
            <person name="Goswami T."/>
            <person name="Rad R."/>
            <person name="Beausoleil S.A."/>
            <person name="Villen J."/>
            <person name="Haas W."/>
            <person name="Sowa M.E."/>
            <person name="Gygi S.P."/>
        </authorList>
    </citation>
    <scope>IDENTIFICATION BY MASS SPECTROMETRY [LARGE SCALE ANALYSIS]</scope>
    <source>
        <tissue>Brown adipose tissue</tissue>
    </source>
</reference>
<name>HCAR1_MOUSE</name>
<sequence>MDNGSCCLIEGEPISQVMPPLLILVFVLGALGNGIALCGFCFHMKTWKSSTIYLFNLAVADFLLMICLPLRTDYYLRRRHWIFGDIACRLVLFKLAMNRAGSIVFLTVVAVDRYFKVVHPHHMVNAISNRTAAATACVLWTLVILGTVYLLMESHLCVQGTLSSCESFIMESANGWHDVMFQLEFFLPLTIILFCSVNVVWSLRRRQQLTRQARMRRATRFIMVVASVFITCYLPSVLARLYFLWTVPTSACDPSVHTALHVTLSFTYLNSMLDPLVYYFSSPSLPKFYTKLTICSLKPKRPGRTKTRRSEEMPISNLCSKSSIDGANRSQRPSDGQWDLQVC</sequence>
<proteinExistence type="evidence at protein level"/>
<accession>Q8C131</accession>
<accession>B9EJ36</accession>
<organism>
    <name type="scientific">Mus musculus</name>
    <name type="common">Mouse</name>
    <dbReference type="NCBI Taxonomy" id="10090"/>
    <lineage>
        <taxon>Eukaryota</taxon>
        <taxon>Metazoa</taxon>
        <taxon>Chordata</taxon>
        <taxon>Craniata</taxon>
        <taxon>Vertebrata</taxon>
        <taxon>Euteleostomi</taxon>
        <taxon>Mammalia</taxon>
        <taxon>Eutheria</taxon>
        <taxon>Euarchontoglires</taxon>
        <taxon>Glires</taxon>
        <taxon>Rodentia</taxon>
        <taxon>Myomorpha</taxon>
        <taxon>Muroidea</taxon>
        <taxon>Muridae</taxon>
        <taxon>Murinae</taxon>
        <taxon>Mus</taxon>
        <taxon>Mus</taxon>
    </lineage>
</organism>
<gene>
    <name type="primary">Hcar1</name>
    <name type="synonym">Gpr81</name>
</gene>
<evidence type="ECO:0000255" key="1"/>
<evidence type="ECO:0000255" key="2">
    <source>
        <dbReference type="PROSITE-ProRule" id="PRU00521"/>
    </source>
</evidence>
<evidence type="ECO:0000256" key="3">
    <source>
        <dbReference type="SAM" id="MobiDB-lite"/>
    </source>
</evidence>
<evidence type="ECO:0000269" key="4">
    <source>
    </source>
</evidence>
<evidence type="ECO:0000269" key="5">
    <source>
    </source>
</evidence>
<evidence type="ECO:0000305" key="6"/>
<comment type="function">
    <text evidence="4 5">Acts as a receptor for L-lactate and mediates its anti-lipolytic effect through a G(i)-protein-mediated pathway.</text>
</comment>
<comment type="subcellular location">
    <subcellularLocation>
        <location>Cell membrane</location>
        <topology>Multi-pass membrane protein</topology>
    </subcellularLocation>
</comment>
<comment type="tissue specificity">
    <text evidence="4 5">Highly expressed in subcutaneous fat and omental fat and detectable in lower levels in brain and many other tissues. High levels detected in epididymal and subcutaneous fat with slightly lower in omental fat, low levels are detected in the brain, skeletal muscle, kidney, liver and the pancreas (at protein level).</text>
</comment>
<comment type="similarity">
    <text evidence="2">Belongs to the G-protein coupled receptor 1 family.</text>
</comment>